<dbReference type="EMBL" id="M10906">
    <property type="protein sequence ID" value="AAA60297.1"/>
    <property type="molecule type" value="mRNA"/>
</dbReference>
<dbReference type="EMBL" id="M23698">
    <property type="protein sequence ID" value="AAA64799.1"/>
    <property type="molecule type" value="mRNA"/>
</dbReference>
<dbReference type="EMBL" id="X56652">
    <property type="protein sequence ID" value="CAA39974.1"/>
    <property type="molecule type" value="Genomic_DNA"/>
</dbReference>
<dbReference type="EMBL" id="CR542241">
    <property type="protein sequence ID" value="CAG47037.1"/>
    <property type="molecule type" value="mRNA"/>
</dbReference>
<dbReference type="EMBL" id="AC107948">
    <property type="status" value="NOT_ANNOTATED_CDS"/>
    <property type="molecule type" value="Genomic_DNA"/>
</dbReference>
<dbReference type="EMBL" id="BC007022">
    <property type="protein sequence ID" value="AAH07022.1"/>
    <property type="molecule type" value="mRNA"/>
</dbReference>
<dbReference type="EMBL" id="BC105796">
    <property type="protein sequence ID" value="AAI05797.1"/>
    <property type="molecule type" value="mRNA"/>
</dbReference>
<dbReference type="EMBL" id="X51439">
    <property type="protein sequence ID" value="CAA35804.1"/>
    <property type="molecule type" value="mRNA"/>
</dbReference>
<dbReference type="EMBL" id="X51441">
    <property type="protein sequence ID" value="CAA35806.1"/>
    <property type="molecule type" value="mRNA"/>
</dbReference>
<dbReference type="EMBL" id="X51442">
    <property type="protein sequence ID" value="CAA35807.1"/>
    <property type="molecule type" value="mRNA"/>
</dbReference>
<dbReference type="CCDS" id="CCDS7835.1"/>
<dbReference type="PIR" id="A22342">
    <property type="entry name" value="YLHUS"/>
</dbReference>
<dbReference type="PIR" id="I39456">
    <property type="entry name" value="I39456"/>
</dbReference>
<dbReference type="RefSeq" id="NP_000322.2">
    <property type="nucleotide sequence ID" value="NM_000331.5"/>
</dbReference>
<dbReference type="RefSeq" id="NP_001171477.2">
    <property type="nucleotide sequence ID" value="NM_001178006.3"/>
</dbReference>
<dbReference type="RefSeq" id="NP_954630.2">
    <property type="nucleotide sequence ID" value="NM_199161.5"/>
</dbReference>
<dbReference type="PDB" id="4IP8">
    <property type="method" value="X-ray"/>
    <property type="resolution" value="2.19 A"/>
    <property type="chains" value="A/B/C/D=19-122"/>
</dbReference>
<dbReference type="PDB" id="4IP9">
    <property type="method" value="X-ray"/>
    <property type="resolution" value="2.50 A"/>
    <property type="chains" value="A/B=19-122"/>
</dbReference>
<dbReference type="PDB" id="6MST">
    <property type="method" value="EM"/>
    <property type="resolution" value="2.70 A"/>
    <property type="chains" value="A/B/C/D/E/F/G/H/I/J/K/L=20-85"/>
</dbReference>
<dbReference type="PDB" id="7ZKY">
    <property type="method" value="EM"/>
    <property type="resolution" value="2.56 A"/>
    <property type="chains" value="A/B/C/D/E/F/G/H/I/J/K/L=20-87"/>
</dbReference>
<dbReference type="PDBsum" id="4IP8"/>
<dbReference type="PDBsum" id="4IP9"/>
<dbReference type="PDBsum" id="6MST"/>
<dbReference type="PDBsum" id="7ZKY"/>
<dbReference type="EMDB" id="EMD-14771"/>
<dbReference type="EMDB" id="EMD-9232"/>
<dbReference type="SMR" id="P0DJI8"/>
<dbReference type="BioGRID" id="112196">
    <property type="interactions" value="50"/>
</dbReference>
<dbReference type="FunCoup" id="P0DJI8">
    <property type="interactions" value="60"/>
</dbReference>
<dbReference type="IntAct" id="P0DJI8">
    <property type="interactions" value="38"/>
</dbReference>
<dbReference type="STRING" id="9606.ENSP00000384906"/>
<dbReference type="iPTMnet" id="P0DJI8"/>
<dbReference type="PhosphoSitePlus" id="P0DJI8"/>
<dbReference type="BioMuta" id="SAA1"/>
<dbReference type="DMDM" id="395406826"/>
<dbReference type="jPOST" id="P0DJI8"/>
<dbReference type="MassIVE" id="P0DJI8"/>
<dbReference type="PaxDb" id="9606-ENSP00000384906"/>
<dbReference type="PeptideAtlas" id="P0DJI8"/>
<dbReference type="ProteomicsDB" id="22986"/>
<dbReference type="ProteomicsDB" id="52549"/>
<dbReference type="ABCD" id="P0DJI8">
    <property type="antibodies" value="3 sequenced antibodies"/>
</dbReference>
<dbReference type="Antibodypedia" id="12220">
    <property type="antibodies" value="662 antibodies from 35 providers"/>
</dbReference>
<dbReference type="DNASU" id="6288"/>
<dbReference type="Ensembl" id="ENST00000356524.9">
    <property type="protein sequence ID" value="ENSP00000348918.4"/>
    <property type="gene ID" value="ENSG00000173432.13"/>
</dbReference>
<dbReference type="Ensembl" id="ENST00000405158.2">
    <property type="protein sequence ID" value="ENSP00000384906.2"/>
    <property type="gene ID" value="ENSG00000173432.13"/>
</dbReference>
<dbReference type="Ensembl" id="ENST00000532858.5">
    <property type="protein sequence ID" value="ENSP00000436866.1"/>
    <property type="gene ID" value="ENSG00000173432.13"/>
</dbReference>
<dbReference type="Ensembl" id="ENST00000672418.1">
    <property type="protein sequence ID" value="ENSP00000500630.1"/>
    <property type="gene ID" value="ENSG00000288411.1"/>
</dbReference>
<dbReference type="Ensembl" id="ENST00000672662.1">
    <property type="protein sequence ID" value="ENSP00000500281.1"/>
    <property type="gene ID" value="ENSG00000288411.1"/>
</dbReference>
<dbReference type="Ensembl" id="ENST00000672712.1">
    <property type="protein sequence ID" value="ENSP00000500639.1"/>
    <property type="gene ID" value="ENSG00000288411.1"/>
</dbReference>
<dbReference type="GeneID" id="6288"/>
<dbReference type="KEGG" id="hsa:6288"/>
<dbReference type="MANE-Select" id="ENST00000356524.9">
    <property type="protein sequence ID" value="ENSP00000348918.4"/>
    <property type="RefSeq nucleotide sequence ID" value="NM_199161.5"/>
    <property type="RefSeq protein sequence ID" value="NP_954630.2"/>
</dbReference>
<dbReference type="UCSC" id="uc057zpu.1">
    <property type="organism name" value="human"/>
</dbReference>
<dbReference type="AGR" id="HGNC:10513"/>
<dbReference type="CTD" id="6288"/>
<dbReference type="DisGeNET" id="6288"/>
<dbReference type="GeneCards" id="SAA1"/>
<dbReference type="HGNC" id="HGNC:10513">
    <property type="gene designation" value="SAA1"/>
</dbReference>
<dbReference type="HPA" id="ENSG00000173432">
    <property type="expression patterns" value="Tissue enriched (liver)"/>
</dbReference>
<dbReference type="MalaCards" id="SAA1"/>
<dbReference type="MIM" id="104750">
    <property type="type" value="gene"/>
</dbReference>
<dbReference type="neXtProt" id="NX_P0DJI8"/>
<dbReference type="OpenTargets" id="ENSG00000173432"/>
<dbReference type="Orphanet" id="85445">
    <property type="disease" value="AA amyloidosis"/>
</dbReference>
<dbReference type="VEuPathDB" id="HostDB:ENSG00000173432"/>
<dbReference type="eggNOG" id="ENOG502S4PB">
    <property type="taxonomic scope" value="Eukaryota"/>
</dbReference>
<dbReference type="GeneTree" id="ENSGT00390000004737"/>
<dbReference type="HOGENOM" id="CLU_129936_0_0_1"/>
<dbReference type="InParanoid" id="P0DJI8"/>
<dbReference type="OMA" id="GHEDTIA"/>
<dbReference type="OrthoDB" id="6112826at2759"/>
<dbReference type="PAN-GO" id="P0DJI8">
    <property type="GO annotations" value="2 GO annotations based on evolutionary models"/>
</dbReference>
<dbReference type="PhylomeDB" id="P0DJI8"/>
<dbReference type="TreeFam" id="TF332544"/>
<dbReference type="PathwayCommons" id="P0DJI8"/>
<dbReference type="Reactome" id="R-HSA-3000471">
    <property type="pathway name" value="Scavenging by Class B Receptors"/>
</dbReference>
<dbReference type="Reactome" id="R-HSA-416476">
    <property type="pathway name" value="G alpha (q) signalling events"/>
</dbReference>
<dbReference type="Reactome" id="R-HSA-418594">
    <property type="pathway name" value="G alpha (i) signalling events"/>
</dbReference>
<dbReference type="Reactome" id="R-HSA-444473">
    <property type="pathway name" value="Formyl peptide receptors bind formyl peptides and many other ligands"/>
</dbReference>
<dbReference type="Reactome" id="R-HSA-445989">
    <property type="pathway name" value="TAK1-dependent IKK and NF-kappa-B activation"/>
</dbReference>
<dbReference type="Reactome" id="R-HSA-6785807">
    <property type="pathway name" value="Interleukin-4 and Interleukin-13 signaling"/>
</dbReference>
<dbReference type="Reactome" id="R-HSA-879415">
    <property type="pathway name" value="Advanced glycosylation endproduct receptor signaling"/>
</dbReference>
<dbReference type="Reactome" id="R-HSA-933542">
    <property type="pathway name" value="TRAF6 mediated NF-kB activation"/>
</dbReference>
<dbReference type="Reactome" id="R-HSA-977225">
    <property type="pathway name" value="Amyloid fiber formation"/>
</dbReference>
<dbReference type="SignaLink" id="P0DJI8"/>
<dbReference type="BioGRID-ORCS" id="6288">
    <property type="hits" value="15 hits in 1063 CRISPR screens"/>
</dbReference>
<dbReference type="ChiTaRS" id="SAA1">
    <property type="organism name" value="human"/>
</dbReference>
<dbReference type="EvolutionaryTrace" id="P0DJI8"/>
<dbReference type="GeneWiki" id="Serum_amyloid_A1"/>
<dbReference type="GenomeRNAi" id="6288"/>
<dbReference type="Pharos" id="P0DJI8">
    <property type="development level" value="Tbio"/>
</dbReference>
<dbReference type="PRO" id="PR:P0DJI8"/>
<dbReference type="Proteomes" id="UP000005640">
    <property type="component" value="Chromosome 11"/>
</dbReference>
<dbReference type="RNAct" id="P0DJI8">
    <property type="molecule type" value="protein"/>
</dbReference>
<dbReference type="Bgee" id="ENSG00000173432">
    <property type="expression patterns" value="Expressed in right lobe of liver and 88 other cell types or tissues"/>
</dbReference>
<dbReference type="ExpressionAtlas" id="P0DJI8">
    <property type="expression patterns" value="baseline and differential"/>
</dbReference>
<dbReference type="GO" id="GO:0005881">
    <property type="term" value="C:cytoplasmic microtubule"/>
    <property type="evidence" value="ECO:0000314"/>
    <property type="project" value="CACAO"/>
</dbReference>
<dbReference type="GO" id="GO:0071682">
    <property type="term" value="C:endocytic vesicle lumen"/>
    <property type="evidence" value="ECO:0000304"/>
    <property type="project" value="Reactome"/>
</dbReference>
<dbReference type="GO" id="GO:0070062">
    <property type="term" value="C:extracellular exosome"/>
    <property type="evidence" value="ECO:0007005"/>
    <property type="project" value="UniProtKB"/>
</dbReference>
<dbReference type="GO" id="GO:0005576">
    <property type="term" value="C:extracellular region"/>
    <property type="evidence" value="ECO:0000304"/>
    <property type="project" value="Reactome"/>
</dbReference>
<dbReference type="GO" id="GO:0034364">
    <property type="term" value="C:high-density lipoprotein particle"/>
    <property type="evidence" value="ECO:0007669"/>
    <property type="project" value="UniProtKB-KW"/>
</dbReference>
<dbReference type="GO" id="GO:0001664">
    <property type="term" value="F:G protein-coupled receptor binding"/>
    <property type="evidence" value="ECO:0000314"/>
    <property type="project" value="UniProtKB"/>
</dbReference>
<dbReference type="GO" id="GO:0008201">
    <property type="term" value="F:heparin binding"/>
    <property type="evidence" value="ECO:0007669"/>
    <property type="project" value="UniProtKB-KW"/>
</dbReference>
<dbReference type="GO" id="GO:0006953">
    <property type="term" value="P:acute-phase response"/>
    <property type="evidence" value="ECO:0007669"/>
    <property type="project" value="UniProtKB-KW"/>
</dbReference>
<dbReference type="GO" id="GO:0048247">
    <property type="term" value="P:lymphocyte chemotaxis"/>
    <property type="evidence" value="ECO:0000314"/>
    <property type="project" value="UniProtKB"/>
</dbReference>
<dbReference type="GO" id="GO:0048246">
    <property type="term" value="P:macrophage chemotaxis"/>
    <property type="evidence" value="ECO:0000314"/>
    <property type="project" value="UniProtKB"/>
</dbReference>
<dbReference type="GO" id="GO:0050728">
    <property type="term" value="P:negative regulation of inflammatory response"/>
    <property type="evidence" value="ECO:0000303"/>
    <property type="project" value="UniProtKB"/>
</dbReference>
<dbReference type="GO" id="GO:0030593">
    <property type="term" value="P:neutrophil chemotaxis"/>
    <property type="evidence" value="ECO:0000303"/>
    <property type="project" value="UniProtKB"/>
</dbReference>
<dbReference type="GO" id="GO:0030168">
    <property type="term" value="P:platelet activation"/>
    <property type="evidence" value="ECO:0000303"/>
    <property type="project" value="UniProtKB"/>
</dbReference>
<dbReference type="GO" id="GO:0045785">
    <property type="term" value="P:positive regulation of cell adhesion"/>
    <property type="evidence" value="ECO:0000314"/>
    <property type="project" value="UniProtKB"/>
</dbReference>
<dbReference type="GO" id="GO:0001819">
    <property type="term" value="P:positive regulation of cytokine production"/>
    <property type="evidence" value="ECO:0000314"/>
    <property type="project" value="UniProtKB"/>
</dbReference>
<dbReference type="GO" id="GO:0007204">
    <property type="term" value="P:positive regulation of cytosolic calcium ion concentration"/>
    <property type="evidence" value="ECO:0000314"/>
    <property type="project" value="UniProtKB"/>
</dbReference>
<dbReference type="GO" id="GO:0032732">
    <property type="term" value="P:positive regulation of interleukin-1 production"/>
    <property type="evidence" value="ECO:0000303"/>
    <property type="project" value="UniProtKB"/>
</dbReference>
<dbReference type="GO" id="GO:0050708">
    <property type="term" value="P:regulation of protein secretion"/>
    <property type="evidence" value="ECO:0000303"/>
    <property type="project" value="UniProtKB"/>
</dbReference>
<dbReference type="FunFam" id="1.10.132.110:FF:000001">
    <property type="entry name" value="Serum amyloid A protein"/>
    <property type="match status" value="1"/>
</dbReference>
<dbReference type="Gene3D" id="1.10.132.110">
    <property type="entry name" value="Serum amyloid A protein"/>
    <property type="match status" value="1"/>
</dbReference>
<dbReference type="InterPro" id="IPR000096">
    <property type="entry name" value="Serum_amyloid_A"/>
</dbReference>
<dbReference type="InterPro" id="IPR052464">
    <property type="entry name" value="Synovial_Prolif_Regulator"/>
</dbReference>
<dbReference type="PANTHER" id="PTHR23424">
    <property type="entry name" value="SERUM AMYLOID A"/>
    <property type="match status" value="1"/>
</dbReference>
<dbReference type="PANTHER" id="PTHR23424:SF29">
    <property type="entry name" value="SERUM AMYLOID A PROTEIN"/>
    <property type="match status" value="1"/>
</dbReference>
<dbReference type="Pfam" id="PF00277">
    <property type="entry name" value="SAA"/>
    <property type="match status" value="1"/>
</dbReference>
<dbReference type="PIRSF" id="PIRSF002472">
    <property type="entry name" value="Serum_amyloid_A"/>
    <property type="match status" value="1"/>
</dbReference>
<dbReference type="PRINTS" id="PR00306">
    <property type="entry name" value="SERUMAMYLOID"/>
</dbReference>
<dbReference type="SMART" id="SM00197">
    <property type="entry name" value="SAA"/>
    <property type="match status" value="1"/>
</dbReference>
<dbReference type="PROSITE" id="PS00992">
    <property type="entry name" value="SAA"/>
    <property type="match status" value="1"/>
</dbReference>
<name>SAA1_HUMAN</name>
<accession>P0DJI8</accession>
<accession>E9PQD6</accession>
<accession>P02735</accession>
<accession>P02736</accession>
<accession>P02737</accession>
<accession>Q16730</accession>
<accession>Q16834</accession>
<accession>Q16835</accession>
<accession>Q16879</accession>
<accession>Q3KRB3</accession>
<accession>Q6FG67</accession>
<accession>Q96QN0</accession>
<accession>Q9UCK9</accession>
<accession>Q9UCL0</accession>
<reference key="1">
    <citation type="journal article" date="1985" name="Biochemistry">
        <title>Human serum amyloid A (SAA): biosynthesis and postsynthetic processing of preSAA and structural variants defined by complementary DNA.</title>
        <authorList>
            <person name="Sipe J.D."/>
            <person name="Colten H.R."/>
            <person name="Goldberger G."/>
            <person name="Edge M.D."/>
            <person name="Tack B.F."/>
            <person name="Cohen A.S."/>
            <person name="Whitehead A.S."/>
        </authorList>
    </citation>
    <scope>NUCLEOTIDE SEQUENCE [MRNA] (ALLELE SAA1.1)</scope>
    <scope>VARIANTS VAL-70; ALA-75 AND SER-77</scope>
</reference>
<reference key="2">
    <citation type="journal article" date="1988" name="J. Clin. Invest.">
        <title>Human serum amyloid A. Three hepatic mRNAs and the corresponding proteins in one person.</title>
        <authorList>
            <person name="Kluve-Beckerman B."/>
            <person name="Dwulet F.E."/>
            <person name="Benson M.D."/>
        </authorList>
    </citation>
    <scope>NUCLEOTIDE SEQUENCE [MRNA] (ALLELE SAA1.1)</scope>
    <scope>VARIANTS VAL-70; ALA-75 AND SER-77</scope>
    <source>
        <tissue>Liver</tissue>
    </source>
</reference>
<reference key="3">
    <citation type="journal article" date="1991" name="Scand. J. Immunol.">
        <title>The human acute-phase serum amyloid A gene family: structure, evolution and expression in hepatoma cells.</title>
        <authorList>
            <person name="Betts J."/>
            <person name="Edbrooke M."/>
            <person name="Thakker R."/>
            <person name="Woo P."/>
        </authorList>
    </citation>
    <scope>NUCLEOTIDE SEQUENCE [GENOMIC DNA] (ALLELE SAA1.5)</scope>
    <scope>VARIANT SER-77</scope>
    <source>
        <tissue>Liver</tissue>
    </source>
</reference>
<reference key="4">
    <citation type="submission" date="2004-06" db="EMBL/GenBank/DDBJ databases">
        <title>Cloning of human full open reading frames in Gateway(TM) system entry vector (pDONR201).</title>
        <authorList>
            <person name="Halleck A."/>
            <person name="Ebert L."/>
            <person name="Mkoundinya M."/>
            <person name="Schick M."/>
            <person name="Eisenstein S."/>
            <person name="Neubert P."/>
            <person name="Kstrang K."/>
            <person name="Schatten R."/>
            <person name="Shen B."/>
            <person name="Henze S."/>
            <person name="Mar W."/>
            <person name="Korn B."/>
            <person name="Zuo D."/>
            <person name="Hu Y."/>
            <person name="LaBaer J."/>
        </authorList>
    </citation>
    <scope>NUCLEOTIDE SEQUENCE [LARGE SCALE MRNA] (ALLELE SAA1.5)</scope>
    <scope>VARIANT SER-77</scope>
</reference>
<reference key="5">
    <citation type="journal article" date="2006" name="Nature">
        <title>Human chromosome 11 DNA sequence and analysis including novel gene identification.</title>
        <authorList>
            <person name="Taylor T.D."/>
            <person name="Noguchi H."/>
            <person name="Totoki Y."/>
            <person name="Toyoda A."/>
            <person name="Kuroki Y."/>
            <person name="Dewar K."/>
            <person name="Lloyd C."/>
            <person name="Itoh T."/>
            <person name="Takeda T."/>
            <person name="Kim D.-W."/>
            <person name="She X."/>
            <person name="Barlow K.F."/>
            <person name="Bloom T."/>
            <person name="Bruford E."/>
            <person name="Chang J.L."/>
            <person name="Cuomo C.A."/>
            <person name="Eichler E."/>
            <person name="FitzGerald M.G."/>
            <person name="Jaffe D.B."/>
            <person name="LaButti K."/>
            <person name="Nicol R."/>
            <person name="Park H.-S."/>
            <person name="Seaman C."/>
            <person name="Sougnez C."/>
            <person name="Yang X."/>
            <person name="Zimmer A.R."/>
            <person name="Zody M.C."/>
            <person name="Birren B.W."/>
            <person name="Nusbaum C."/>
            <person name="Fujiyama A."/>
            <person name="Hattori M."/>
            <person name="Rogers J."/>
            <person name="Lander E.S."/>
            <person name="Sakaki Y."/>
        </authorList>
    </citation>
    <scope>NUCLEOTIDE SEQUENCE [LARGE SCALE GENOMIC DNA] (ALLELE SAA1.5)</scope>
</reference>
<reference key="6">
    <citation type="journal article" date="2004" name="Genome Res.">
        <title>The status, quality, and expansion of the NIH full-length cDNA project: the Mammalian Gene Collection (MGC).</title>
        <authorList>
            <consortium name="The MGC Project Team"/>
        </authorList>
    </citation>
    <scope>NUCLEOTIDE SEQUENCE [LARGE SCALE MRNA] (ALLELE SAA1.1)</scope>
    <scope>VARIANTS VAL-70; ALA-75 AND SER-77</scope>
    <source>
        <tissue>Liver</tissue>
    </source>
</reference>
<reference key="7">
    <citation type="journal article" date="1990" name="Biochem. J.">
        <title>Heterogeneity of human serum amyloid A protein. Five different variants from one individual demonstrated by cDNA sequence analysis.</title>
        <authorList>
            <person name="Steinkasserer A."/>
            <person name="Weiss E.H."/>
            <person name="Schwaeble W."/>
            <person name="Linke R.P."/>
        </authorList>
    </citation>
    <scope>NUCLEOTIDE SEQUENCE [MRNA] OF 73-122</scope>
    <scope>VARIANTS ALA-75; SER-77 AND ASN-78</scope>
    <source>
        <tissue>Liver</tissue>
    </source>
</reference>
<reference key="8">
    <citation type="journal article" date="1982" name="Biochemistry">
        <title>Amino acid sequence of amyloid-related apoprotein (apoSAA1) from human high-density lipoprotein.</title>
        <authorList>
            <person name="Parmelee D.C."/>
            <person name="Titani K."/>
            <person name="Ericsson L.H."/>
            <person name="Eriksen N."/>
            <person name="Benditt E.P."/>
            <person name="Walsh K.A."/>
        </authorList>
    </citation>
    <scope>PROTEIN SEQUENCE OF 19-122</scope>
    <scope>SUBCELLULAR LOCATION</scope>
    <scope>SUBUNIT</scope>
    <scope>TISSUE SPECIFICITY</scope>
</reference>
<reference key="9">
    <citation type="journal article" date="1992" name="Biochem. J.">
        <title>Human serum amyloid A protein. Complete amino acid sequence of a new variant.</title>
        <authorList>
            <person name="Beach C.M."/>
            <person name="de Beer M.C."/>
            <person name="Sipe J.D."/>
            <person name="Loose L.D."/>
            <person name="de Beer F.C."/>
        </authorList>
    </citation>
    <scope>PROTEIN SEQUENCE OF 19-122 (ALLELE SAA1.2)</scope>
</reference>
<reference key="10">
    <citation type="journal article" date="1980" name="Scand. J. Immunol.">
        <title>An unusually large (83 amino acid residues) amyloid fibril protein AA from a patient with Waldenstrom's macroglobulinaemia and amyloidosis.</title>
        <authorList>
            <person name="Moyner K."/>
            <person name="Sletten K."/>
            <person name="Husby G."/>
            <person name="Natvig J.B."/>
        </authorList>
    </citation>
    <scope>PROTEIN SEQUENCE OF 19-101</scope>
</reference>
<reference key="11">
    <citation type="journal article" date="1972" name="J. Biol. Chem.">
        <title>Amino acid sequence of an amyloid fibril protein of unknown origin.</title>
        <authorList>
            <person name="Ein D."/>
            <person name="Kimura S."/>
            <person name="Terry W.D."/>
            <person name="Magnotta J."/>
            <person name="Glenner G.G."/>
        </authorList>
    </citation>
    <scope>PROTEIN SEQUENCE OF 19-94</scope>
</reference>
<reference key="12">
    <citation type="journal article" date="1972" name="J. Clin. Invest.">
        <title>The amino acid sequence of a major nonimmunoglobulin component of some amyloid fibrils.</title>
        <authorList>
            <person name="Levin M."/>
            <person name="Franklin E.C."/>
            <person name="Frangione B."/>
            <person name="Pras M."/>
        </authorList>
    </citation>
    <scope>PROTEIN SEQUENCE OF 19-94 (FAMILIAL MEDITERRANEAN FEVER PATIENT)</scope>
</reference>
<reference key="13">
    <citation type="journal article" date="1974" name="Eur. J. Biochem.">
        <title>The complete amino-acid sequence of non-immunoglobulin amyloid fibril protein AS in rheumatoid arthritis.</title>
        <authorList>
            <person name="Sletten K."/>
            <person name="Husby G."/>
        </authorList>
    </citation>
    <scope>PROTEIN SEQUENCE OF 19-94</scope>
    <scope>TISSUE SPECIFICITY</scope>
</reference>
<reference key="14">
    <citation type="journal article" date="1992" name="Biochim. Biophys. Acta">
        <title>Identification of two novel amyloid A protein subsets coexisting in an individual patient of AA-amyloidosis.</title>
        <authorList>
            <person name="Baba S."/>
            <person name="Takahashi T."/>
            <person name="Kasama T."/>
            <person name="Shirasawa H."/>
        </authorList>
    </citation>
    <scope>PROTEIN SEQUENCE OF 19-94</scope>
    <scope>MASS SPECTROMETRY</scope>
    <scope>DISEASE</scope>
    <scope>VARIANTS ALA-75 AND ASN-78</scope>
    <scope>ALLELE SAA1.3</scope>
    <source>
        <tissue>Thyroid</tissue>
    </source>
</reference>
<reference key="15">
    <citation type="journal article" date="1976" name="Biochem. Biophys. Res. Commun.">
        <title>The complete amino acid sequence of an amyloid fibril protein AA1 of unusual size (64 residues).</title>
        <authorList>
            <person name="Sletten K."/>
            <person name="Husby G."/>
            <person name="Natvig J.B."/>
        </authorList>
    </citation>
    <scope>PROTEIN SEQUENCE OF 19-82</scope>
</reference>
<reference key="16">
    <citation type="journal article" date="1971" name="FEBS Lett.">
        <title>The major proteins of human and monkey amyloid substance: common properties including unusual N-terminal amino acid sequences.</title>
        <authorList>
            <person name="Benditt E.P."/>
            <person name="Eriksen N."/>
            <person name="Hermodson M.A."/>
            <person name="Ericsson L.H."/>
        </authorList>
    </citation>
    <scope>PROTEIN SEQUENCE OF 19-42</scope>
</reference>
<reference key="17">
    <citation type="journal article" date="1987" name="Biochemistry">
        <title>Degradation and deposition of amyloid AA fibrils are tissue specific.</title>
        <authorList>
            <person name="Prelli F."/>
            <person name="Pras M."/>
            <person name="Frangione B."/>
        </authorList>
    </citation>
    <scope>PROTEIN SEQUENCE OF 20-100</scope>
</reference>
<reference key="18">
    <citation type="journal article" date="2003" name="Proteomics">
        <title>Identification and validation of a potential lung cancer serum biomarker detected by matrix-assisted laser desorption/ionization-time of flight spectra analysis.</title>
        <authorList>
            <person name="Howard B.A."/>
            <person name="Wang M.Z."/>
            <person name="Campa M.J."/>
            <person name="Corro C."/>
            <person name="Fitzgerald M.C."/>
            <person name="Patz E.F. Jr."/>
        </authorList>
    </citation>
    <scope>PROTEIN SEQUENCE OF 20-33; 44-57; 64-80 AND 86-122</scope>
    <scope>TISSUE SPECIFICITY</scope>
    <scope>MASS SPECTROMETRY</scope>
</reference>
<reference key="19">
    <citation type="journal article" date="1996" name="Electrophoresis">
        <title>Characterization of human serum amyloid A protein isoforms separated by two-dimensional electrophoresis by liquid chromatography/electrospray ionization tandem mass spectrometry.</title>
        <authorList>
            <person name="Ducret A."/>
            <person name="Bruun C.F."/>
            <person name="Bures E.J."/>
            <person name="Marhaug G."/>
            <person name="Husby G."/>
            <person name="Aebersold R."/>
        </authorList>
    </citation>
    <scope>PARTIAL PROTEIN SEQUENCE (VARIOUS FORMS)</scope>
    <scope>METHYLATION AT ASN-101</scope>
</reference>
<reference key="20">
    <citation type="journal article" date="1996" name="Biochem. Biophys. Res. Commun.">
        <title>A protein AA-variant derived from a novel serum AA protein, SAA1 delta, in an individual from Papua New Guinea.</title>
        <authorList>
            <person name="Westermark P."/>
            <person name="Sletten K."/>
            <person name="Westermark G.T."/>
            <person name="Raynes J."/>
            <person name="McAdam K.P."/>
        </authorList>
    </citation>
    <scope>IDENTIFICATION OF ALLELE SAA1.4</scope>
</reference>
<reference key="21">
    <citation type="journal article" date="1999" name="Amyloid">
        <title>Revised nomenclature for serum amyloid A (SAA). Nomenclature Committee of the International Society of Amyloidosis. Part 2.</title>
        <authorList>
            <person name="Sipe J."/>
        </authorList>
    </citation>
    <scope>POLYMORPHISM</scope>
    <scope>NOMENCLATURE OF ALLELES</scope>
</reference>
<reference key="22">
    <citation type="journal article" date="2003" name="FEBS Lett.">
        <title>Detection of novel truncated forms of human serum amyloid A protein in human plasma.</title>
        <authorList>
            <person name="Kiernan U.A."/>
            <person name="Tubbs K.A."/>
            <person name="Nedelkov D."/>
            <person name="Niederkofler E.E."/>
            <person name="Nelson R.W."/>
        </authorList>
    </citation>
    <scope>MASS SPECTROMETRY</scope>
</reference>
<reference key="23">
    <citation type="journal article" date="1993" name="Arch. Biochem. Biophys.">
        <title>A novel polymorphism of human serum amyloid A protein, SAA1 gamma, is characterized by alanines at both residues 52 and 57.</title>
        <authorList>
            <person name="Baba S."/>
            <person name="Takahashi T."/>
            <person name="Kasama T."/>
            <person name="Fujie M."/>
            <person name="Shirasawa H."/>
        </authorList>
    </citation>
    <scope>IDENTIFICATION OF ALLELE SAA1.3</scope>
</reference>
<reference key="24">
    <citation type="journal article" date="2014" name="J. Proteomics">
        <title>An enzyme assisted RP-RPLC approach for in-depth analysis of human liver phosphoproteome.</title>
        <authorList>
            <person name="Bian Y."/>
            <person name="Song C."/>
            <person name="Cheng K."/>
            <person name="Dong M."/>
            <person name="Wang F."/>
            <person name="Huang J."/>
            <person name="Sun D."/>
            <person name="Wang L."/>
            <person name="Ye M."/>
            <person name="Zou H."/>
        </authorList>
    </citation>
    <scope>IDENTIFICATION BY MASS SPECTROMETRY [LARGE SCALE ANALYSIS]</scope>
    <source>
        <tissue>Liver</tissue>
    </source>
</reference>
<reference key="25">
    <citation type="journal article" date="2014" name="Proc. Natl. Acad. Sci. U.S.A.">
        <title>Structural mechanism of serum amyloid A-mediated inflammatory amyloidosis.</title>
        <authorList>
            <person name="Lu J."/>
            <person name="Yu Y."/>
            <person name="Zhu I."/>
            <person name="Cheng Y."/>
            <person name="Sun P.D."/>
        </authorList>
    </citation>
    <scope>X-RAY CRYSTALLOGRAPHY (2.19 ANGSTROMS) OF 19-122</scope>
    <scope>SUBUNIT</scope>
    <scope>MUTAGENESIS OF ARG-19; ARG-33; ARG-37; ARG-65; ARG-80 AND HIS-89</scope>
</reference>
<protein>
    <recommendedName>
        <fullName>Serum amyloid A-1 protein</fullName>
        <shortName>SAA</shortName>
    </recommendedName>
    <component>
        <recommendedName>
            <fullName>Amyloid protein A</fullName>
        </recommendedName>
        <alternativeName>
            <fullName>Amyloid fibril protein AA</fullName>
        </alternativeName>
    </component>
    <component>
        <recommendedName>
            <fullName>Serum amyloid protein A(2-104)</fullName>
        </recommendedName>
    </component>
    <component>
        <recommendedName>
            <fullName>Serum amyloid protein A(3-104)</fullName>
        </recommendedName>
    </component>
    <component>
        <recommendedName>
            <fullName>Serum amyloid protein A(2-103)</fullName>
        </recommendedName>
    </component>
    <component>
        <recommendedName>
            <fullName>Serum amyloid protein A(2-102)</fullName>
        </recommendedName>
    </component>
    <component>
        <recommendedName>
            <fullName>Serum amyloid protein A(4-101)</fullName>
        </recommendedName>
    </component>
</protein>
<evidence type="ECO:0000256" key="1">
    <source>
        <dbReference type="SAM" id="MobiDB-lite"/>
    </source>
</evidence>
<evidence type="ECO:0000269" key="2">
    <source>
    </source>
</evidence>
<evidence type="ECO:0000269" key="3">
    <source>
    </source>
</evidence>
<evidence type="ECO:0000269" key="4">
    <source>
    </source>
</evidence>
<evidence type="ECO:0000269" key="5">
    <source>
    </source>
</evidence>
<evidence type="ECO:0000269" key="6">
    <source>
    </source>
</evidence>
<evidence type="ECO:0000269" key="7">
    <source>
    </source>
</evidence>
<evidence type="ECO:0000269" key="8">
    <source>
    </source>
</evidence>
<evidence type="ECO:0000269" key="9">
    <source>
    </source>
</evidence>
<evidence type="ECO:0000269" key="10">
    <source>
    </source>
</evidence>
<evidence type="ECO:0000269" key="11">
    <source>
    </source>
</evidence>
<evidence type="ECO:0000269" key="12">
    <source>
    </source>
</evidence>
<evidence type="ECO:0000269" key="13">
    <source>
    </source>
</evidence>
<evidence type="ECO:0000269" key="14">
    <source>
    </source>
</evidence>
<evidence type="ECO:0000269" key="15">
    <source>
    </source>
</evidence>
<evidence type="ECO:0000269" key="16">
    <source>
    </source>
</evidence>
<evidence type="ECO:0000269" key="17">
    <source>
    </source>
</evidence>
<evidence type="ECO:0000269" key="18">
    <source>
    </source>
</evidence>
<evidence type="ECO:0000269" key="19">
    <source>
    </source>
</evidence>
<evidence type="ECO:0000269" key="20">
    <source>
    </source>
</evidence>
<evidence type="ECO:0000269" key="21">
    <source>
    </source>
</evidence>
<evidence type="ECO:0000269" key="22">
    <source ref="4"/>
</evidence>
<evidence type="ECO:0000303" key="23">
    <source>
    </source>
</evidence>
<evidence type="ECO:0000305" key="24"/>
<evidence type="ECO:0000305" key="25">
    <source>
    </source>
</evidence>
<evidence type="ECO:0007829" key="26">
    <source>
        <dbReference type="PDB" id="4IP8"/>
    </source>
</evidence>
<evidence type="ECO:0007829" key="27">
    <source>
        <dbReference type="PDB" id="7ZKY"/>
    </source>
</evidence>
<sequence length="122" mass="13546">MKLLTGLVFCSLVLGVSSRSFFSFLGEAFDGARDMWRAYSDMREANYIGSDKYFHARGNYDAAKRGPGGAWAAEVITDARENIQRFFGHGAEDSLADQAANEWGRSGKDPNHFRPAGLPEKY</sequence>
<proteinExistence type="evidence at protein level"/>
<comment type="function">
    <text>Major acute phase protein.</text>
</comment>
<comment type="subunit">
    <text evidence="12 19">Homohexamer; dimer of trimers. Can form amyloid fibrils after partial proteolysis; the native, undenatured protein does not form amyloid fibrils (in vitro). Apolipoprotein of the HDL complex. Binds to heparin.</text>
</comment>
<comment type="subcellular location">
    <subcellularLocation>
        <location evidence="19">Secreted</location>
    </subcellularLocation>
</comment>
<comment type="tissue specificity">
    <text evidence="5 15 19">Expressed by the liver; secreted in plasma (at protein level).</text>
</comment>
<comment type="induction">
    <text>Upon cytokine stimulation.</text>
</comment>
<comment type="PTM">
    <text>This protein is the precursor of amyloid protein A, which is formed by the removal of approximately 24 residues from the C-terminal end.</text>
</comment>
<comment type="mass spectrometry" mass="11702.0" error="14.0" method="MALDI" evidence="5">
    <molecule>Serum amyloid A-1 protein</molecule>
</comment>
<comment type="mass spectrometry" mass="11682.7" method="MALDI" evidence="4">
    <molecule>Serum amyloid A-1 protein</molecule>
</comment>
<comment type="mass spectrometry" mass="11526.5" method="MALDI" evidence="4">
    <molecule>Serum amyloid protein A(2-104)</molecule>
</comment>
<comment type="mass spectrometry" mass="11439.6" method="MALDI" evidence="4">
    <molecule>Serum amyloid protein A(3-104)</molecule>
</comment>
<comment type="mass spectrometry" mass="11363.6" method="MALDI" evidence="4">
    <molecule>Serum amyloid protein A(2-103)</molecule>
</comment>
<comment type="mass spectrometry" mass="11235.6" method="MALDI" evidence="4">
    <molecule>Serum amyloid protein A(2-102)</molecule>
</comment>
<comment type="mass spectrometry" mass="10872.6" method="MALDI" evidence="4">
    <molecule>Serum amyloid protein A(4-101)</molecule>
</comment>
<comment type="mass spectrometry" mass="8337.5" error="0.8" method="Electrospray" evidence="6">
    <molecule>Amyloid protein A</molecule>
    <text>With variants Asn-78 and 86-Leu-Thr-87.</text>
</comment>
<comment type="mass spectrometry" mass="8390.9" error="0.2" method="Electrospray" evidence="6">
    <molecule>Amyloid protein A</molecule>
</comment>
<comment type="polymorphism">
    <text evidence="7 10 14 20 21 22 23">At least 5 different SAA1 alleles have been described: SAA1.1 (SAA1alpha), SAA1.2 (SAA1beta), SAA1.3 (SAA1gamma), SAA1.4 (SAA1delta), SAA1.5 (also named SAA1beta but which differs from SAA1.2) (PubMed:10211414, PubMed:1546977, PubMed:1656519, PubMed:3839415, PubMed:8512321, PubMed:8670280, Ref.4). The sequence shown is that of SAA1.2 (PubMed:10211414, PubMed:1546977).</text>
</comment>
<comment type="disease">
    <text evidence="6">Reactive, secondary amyloidosis is characterized by the extracellular accumulation in various tissues of the SAA1 protein. These deposits are highly insoluble and resistant to proteolysis; they disrupt tissue structure and compromise function.</text>
</comment>
<comment type="disease">
    <text evidence="6">Elevated serum SAA1 protein levels may be associated with lung cancer.</text>
</comment>
<comment type="similarity">
    <text evidence="24">Belongs to the SAA family.</text>
</comment>
<organism>
    <name type="scientific">Homo sapiens</name>
    <name type="common">Human</name>
    <dbReference type="NCBI Taxonomy" id="9606"/>
    <lineage>
        <taxon>Eukaryota</taxon>
        <taxon>Metazoa</taxon>
        <taxon>Chordata</taxon>
        <taxon>Craniata</taxon>
        <taxon>Vertebrata</taxon>
        <taxon>Euteleostomi</taxon>
        <taxon>Mammalia</taxon>
        <taxon>Eutheria</taxon>
        <taxon>Euarchontoglires</taxon>
        <taxon>Primates</taxon>
        <taxon>Haplorrhini</taxon>
        <taxon>Catarrhini</taxon>
        <taxon>Hominidae</taxon>
        <taxon>Homo</taxon>
    </lineage>
</organism>
<keyword id="KW-0002">3D-structure</keyword>
<keyword id="KW-0011">Acute phase</keyword>
<keyword id="KW-0034">Amyloid</keyword>
<keyword id="KW-1008">Amyloidosis</keyword>
<keyword id="KW-0903">Direct protein sequencing</keyword>
<keyword id="KW-0345">HDL</keyword>
<keyword id="KW-0358">Heparin-binding</keyword>
<keyword id="KW-0488">Methylation</keyword>
<keyword id="KW-1267">Proteomics identification</keyword>
<keyword id="KW-1185">Reference proteome</keyword>
<keyword id="KW-0964">Secreted</keyword>
<keyword id="KW-0732">Signal</keyword>
<feature type="signal peptide" evidence="2 3 6 7 15 16 17 18 19">
    <location>
        <begin position="1"/>
        <end position="18"/>
    </location>
</feature>
<feature type="chain" id="PRO_0000031575" description="Serum amyloid A-1 protein">
    <location>
        <begin position="19"/>
        <end position="122"/>
    </location>
</feature>
<feature type="chain" id="PRO_0000031576" description="Amyloid protein A">
    <location>
        <begin position="19"/>
        <end position="94"/>
    </location>
</feature>
<feature type="chain" id="PRO_0000031577" description="Serum amyloid protein A(2-104)">
    <location>
        <begin position="20"/>
        <end position="122"/>
    </location>
</feature>
<feature type="chain" id="PRO_0000031578" description="Serum amyloid protein A(2-103)">
    <location>
        <begin position="20"/>
        <end position="121"/>
    </location>
</feature>
<feature type="chain" id="PRO_0000031579" description="Serum amyloid protein A(2-102)">
    <location>
        <begin position="20"/>
        <end position="120"/>
    </location>
</feature>
<feature type="chain" id="PRO_0000031580" description="Serum amyloid protein A(3-104)">
    <location>
        <begin position="21"/>
        <end position="122"/>
    </location>
</feature>
<feature type="chain" id="PRO_0000031581" description="Serum amyloid protein A(4-101)">
    <location>
        <begin position="22"/>
        <end position="119"/>
    </location>
</feature>
<feature type="propeptide" id="PRO_0000031582" description="Often cleaved during amyloidogenesis">
    <location>
        <begin position="95"/>
        <end position="122"/>
    </location>
</feature>
<feature type="region of interest" description="Important for amyloid formation; forms amyloid fibrils in vitro">
    <location>
        <begin position="19"/>
        <end position="45"/>
    </location>
</feature>
<feature type="region of interest" description="Disordered" evidence="1">
    <location>
        <begin position="98"/>
        <end position="122"/>
    </location>
</feature>
<feature type="modified residue" description="N4,N4-dimethylasparagine" evidence="25">
    <location>
        <position position="101"/>
    </location>
</feature>
<feature type="sequence variant" id="VAR_006925" description="In dbSNP:rs1232745554.">
    <original>G</original>
    <variation>S</variation>
    <location>
        <position position="15"/>
    </location>
</feature>
<feature type="sequence variant" id="VAR_006926" description="In allele SAA1.1." evidence="8 13 14">
    <original>A</original>
    <variation>V</variation>
    <location>
        <position position="70"/>
    </location>
</feature>
<feature type="sequence variant" id="VAR_006927" description="In allele SAA1.1 and allele SAA1.3." evidence="6 8 11 13 14">
    <original>V</original>
    <variation>A</variation>
    <location>
        <position position="75"/>
    </location>
</feature>
<feature type="sequence variant" id="VAR_088562" description="In allele SAA1.5; requires 2 nucleotide substitutions; dbSNP:rs1671926." evidence="8 9 10 11 13 14 22 23">
    <original>T</original>
    <variation>S</variation>
    <location>
        <position position="77"/>
    </location>
</feature>
<feature type="sequence variant" id="VAR_006928" description="In allele SAA1.4; dbSNP:rs557915415." evidence="6 11">
    <original>D</original>
    <variation>N</variation>
    <location>
        <position position="78"/>
    </location>
</feature>
<feature type="sequence variant" id="VAR_057167" description="In dbSNP:rs1059559.">
    <original>F</original>
    <variation>L</variation>
    <location>
        <position position="86"/>
    </location>
</feature>
<feature type="sequence variant" id="VAR_006931" description="In allele SAA1.2; dbSNP:rs79681911.">
    <original>G</original>
    <variation>D</variation>
    <location>
        <position position="90"/>
    </location>
</feature>
<feature type="mutagenesis site" description="Reduces affinity for heparin and nearly abolishes association with HDL; when associated with A-80 and A-89." evidence="12">
    <original>R</original>
    <variation>A</variation>
    <location>
        <position position="19"/>
    </location>
</feature>
<feature type="mutagenesis site" description="Reduces affinity for heparin; when associated with A-37 and A-65." evidence="12">
    <original>R</original>
    <variation>A</variation>
    <location>
        <position position="33"/>
    </location>
</feature>
<feature type="mutagenesis site" description="Reduces affinity for heparin; when associated with A-33 and A-65." evidence="12">
    <original>R</original>
    <variation>A</variation>
    <location>
        <position position="37"/>
    </location>
</feature>
<feature type="mutagenesis site" description="Reduces affinity for heparin; when associated with A-33 and A-37." evidence="12">
    <original>R</original>
    <variation>A</variation>
    <location>
        <position position="65"/>
    </location>
</feature>
<feature type="mutagenesis site" description="Reduces affinity for heparin and nearly abolishes association with HDL; when associated with A-18 and A-89." evidence="12">
    <original>R</original>
    <variation>A</variation>
    <location>
        <position position="80"/>
    </location>
</feature>
<feature type="mutagenesis site" description="Reduces affinity for heparin and nearly abolishes association with HDL; when associated with A-18 and A-80." evidence="12">
    <original>H</original>
    <variation>A</variation>
    <location>
        <position position="89"/>
    </location>
</feature>
<feature type="sequence conflict" description="In Ref. 10; AA sequence and 11; AA sequence." evidence="24" ref="10 11">
    <original>W</original>
    <variation>R</variation>
    <location>
        <position position="71"/>
    </location>
</feature>
<feature type="sequence conflict" description="In Ref. 9; AA sequence." evidence="24" ref="9">
    <original>ADQAAN</original>
    <variation>SEATVK</variation>
    <location>
        <begin position="96"/>
        <end position="101"/>
    </location>
</feature>
<feature type="sequence conflict" description="In Ref. 6; AAH07022." evidence="24" ref="6">
    <original>N</original>
    <variation>D</variation>
    <location>
        <position position="101"/>
    </location>
</feature>
<feature type="sequence conflict" description="In Ref. 1; AAA60297." evidence="24" ref="1">
    <original>P</original>
    <variation>S</variation>
    <location>
        <position position="119"/>
    </location>
</feature>
<feature type="helix" evidence="26">
    <location>
        <begin position="19"/>
        <end position="45"/>
    </location>
</feature>
<feature type="strand" evidence="27">
    <location>
        <begin position="47"/>
        <end position="49"/>
    </location>
</feature>
<feature type="helix" evidence="26">
    <location>
        <begin position="51"/>
        <end position="65"/>
    </location>
</feature>
<feature type="helix" evidence="26">
    <location>
        <begin position="67"/>
        <end position="86"/>
    </location>
</feature>
<feature type="helix" evidence="26">
    <location>
        <begin position="91"/>
        <end position="105"/>
    </location>
</feature>
<feature type="helix" evidence="26">
    <location>
        <begin position="110"/>
        <end position="113"/>
    </location>
</feature>
<gene>
    <name type="primary">SAA1</name>
</gene>